<name>Y2817_PROMH</name>
<accession>B4EZ57</accession>
<keyword id="KW-1185">Reference proteome</keyword>
<protein>
    <recommendedName>
        <fullName evidence="1">UPF0270 protein PMI2817</fullName>
    </recommendedName>
</protein>
<sequence length="73" mass="8333">MIIPWQELSTETLDNLIESFVLREGTDYGMQEKTLEQKVADVKKQLVSGEAVLVWSELHESVNIMPAAQFRPD</sequence>
<reference key="1">
    <citation type="journal article" date="2008" name="J. Bacteriol.">
        <title>Complete genome sequence of uropathogenic Proteus mirabilis, a master of both adherence and motility.</title>
        <authorList>
            <person name="Pearson M.M."/>
            <person name="Sebaihia M."/>
            <person name="Churcher C."/>
            <person name="Quail M.A."/>
            <person name="Seshasayee A.S."/>
            <person name="Luscombe N.M."/>
            <person name="Abdellah Z."/>
            <person name="Arrosmith C."/>
            <person name="Atkin B."/>
            <person name="Chillingworth T."/>
            <person name="Hauser H."/>
            <person name="Jagels K."/>
            <person name="Moule S."/>
            <person name="Mungall K."/>
            <person name="Norbertczak H."/>
            <person name="Rabbinowitsch E."/>
            <person name="Walker D."/>
            <person name="Whithead S."/>
            <person name="Thomson N.R."/>
            <person name="Rather P.N."/>
            <person name="Parkhill J."/>
            <person name="Mobley H.L.T."/>
        </authorList>
    </citation>
    <scope>NUCLEOTIDE SEQUENCE [LARGE SCALE GENOMIC DNA]</scope>
    <source>
        <strain>HI4320</strain>
    </source>
</reference>
<proteinExistence type="inferred from homology"/>
<organism>
    <name type="scientific">Proteus mirabilis (strain HI4320)</name>
    <dbReference type="NCBI Taxonomy" id="529507"/>
    <lineage>
        <taxon>Bacteria</taxon>
        <taxon>Pseudomonadati</taxon>
        <taxon>Pseudomonadota</taxon>
        <taxon>Gammaproteobacteria</taxon>
        <taxon>Enterobacterales</taxon>
        <taxon>Morganellaceae</taxon>
        <taxon>Proteus</taxon>
    </lineage>
</organism>
<comment type="similarity">
    <text evidence="1">Belongs to the UPF0270 family.</text>
</comment>
<feature type="chain" id="PRO_1000132017" description="UPF0270 protein PMI2817">
    <location>
        <begin position="1"/>
        <end position="73"/>
    </location>
</feature>
<evidence type="ECO:0000255" key="1">
    <source>
        <dbReference type="HAMAP-Rule" id="MF_00690"/>
    </source>
</evidence>
<gene>
    <name type="ordered locus">PMI2817</name>
</gene>
<dbReference type="EMBL" id="AM942759">
    <property type="protein sequence ID" value="CAR45552.1"/>
    <property type="molecule type" value="Genomic_DNA"/>
</dbReference>
<dbReference type="RefSeq" id="WP_004246876.1">
    <property type="nucleotide sequence ID" value="NC_010554.1"/>
</dbReference>
<dbReference type="SMR" id="B4EZ57"/>
<dbReference type="EnsemblBacteria" id="CAR45552">
    <property type="protein sequence ID" value="CAR45552"/>
    <property type="gene ID" value="PMI2817"/>
</dbReference>
<dbReference type="GeneID" id="6801820"/>
<dbReference type="KEGG" id="pmr:PMI2817"/>
<dbReference type="eggNOG" id="COG3089">
    <property type="taxonomic scope" value="Bacteria"/>
</dbReference>
<dbReference type="HOGENOM" id="CLU_186759_1_0_6"/>
<dbReference type="Proteomes" id="UP000008319">
    <property type="component" value="Chromosome"/>
</dbReference>
<dbReference type="Gene3D" id="1.10.10.610">
    <property type="entry name" value="YehU-like"/>
    <property type="match status" value="1"/>
</dbReference>
<dbReference type="HAMAP" id="MF_00690">
    <property type="entry name" value="UPF0270"/>
    <property type="match status" value="1"/>
</dbReference>
<dbReference type="InterPro" id="IPR010648">
    <property type="entry name" value="UPF0270"/>
</dbReference>
<dbReference type="InterPro" id="IPR036685">
    <property type="entry name" value="YehU-like_sf"/>
</dbReference>
<dbReference type="NCBIfam" id="NF003438">
    <property type="entry name" value="PRK04966.1"/>
    <property type="match status" value="1"/>
</dbReference>
<dbReference type="Pfam" id="PF06794">
    <property type="entry name" value="UPF0270"/>
    <property type="match status" value="1"/>
</dbReference>
<dbReference type="PIRSF" id="PIRSF006169">
    <property type="entry name" value="UCP006169"/>
    <property type="match status" value="1"/>
</dbReference>
<dbReference type="SUPFAM" id="SSF118001">
    <property type="entry name" value="YehU-like"/>
    <property type="match status" value="1"/>
</dbReference>